<dbReference type="EC" id="6.1.1.16" evidence="1"/>
<dbReference type="EMBL" id="CP000115">
    <property type="protein sequence ID" value="ABA04490.1"/>
    <property type="molecule type" value="Genomic_DNA"/>
</dbReference>
<dbReference type="RefSeq" id="WP_011314519.1">
    <property type="nucleotide sequence ID" value="NC_007406.1"/>
</dbReference>
<dbReference type="SMR" id="Q3STA1"/>
<dbReference type="STRING" id="323098.Nwi_1228"/>
<dbReference type="KEGG" id="nwi:Nwi_1228"/>
<dbReference type="eggNOG" id="COG0215">
    <property type="taxonomic scope" value="Bacteria"/>
</dbReference>
<dbReference type="HOGENOM" id="CLU_013528_0_1_5"/>
<dbReference type="OrthoDB" id="9815130at2"/>
<dbReference type="Proteomes" id="UP000002531">
    <property type="component" value="Chromosome"/>
</dbReference>
<dbReference type="GO" id="GO:0005829">
    <property type="term" value="C:cytosol"/>
    <property type="evidence" value="ECO:0007669"/>
    <property type="project" value="TreeGrafter"/>
</dbReference>
<dbReference type="GO" id="GO:0005524">
    <property type="term" value="F:ATP binding"/>
    <property type="evidence" value="ECO:0007669"/>
    <property type="project" value="UniProtKB-UniRule"/>
</dbReference>
<dbReference type="GO" id="GO:0004817">
    <property type="term" value="F:cysteine-tRNA ligase activity"/>
    <property type="evidence" value="ECO:0007669"/>
    <property type="project" value="UniProtKB-UniRule"/>
</dbReference>
<dbReference type="GO" id="GO:0008270">
    <property type="term" value="F:zinc ion binding"/>
    <property type="evidence" value="ECO:0007669"/>
    <property type="project" value="UniProtKB-UniRule"/>
</dbReference>
<dbReference type="GO" id="GO:0006423">
    <property type="term" value="P:cysteinyl-tRNA aminoacylation"/>
    <property type="evidence" value="ECO:0007669"/>
    <property type="project" value="UniProtKB-UniRule"/>
</dbReference>
<dbReference type="CDD" id="cd00672">
    <property type="entry name" value="CysRS_core"/>
    <property type="match status" value="1"/>
</dbReference>
<dbReference type="FunFam" id="3.40.50.620:FF:000068">
    <property type="entry name" value="Cysteine--tRNA ligase"/>
    <property type="match status" value="1"/>
</dbReference>
<dbReference type="Gene3D" id="1.20.120.1910">
    <property type="entry name" value="Cysteine-tRNA ligase, C-terminal anti-codon recognition domain"/>
    <property type="match status" value="1"/>
</dbReference>
<dbReference type="Gene3D" id="3.40.50.620">
    <property type="entry name" value="HUPs"/>
    <property type="match status" value="1"/>
</dbReference>
<dbReference type="HAMAP" id="MF_00041">
    <property type="entry name" value="Cys_tRNA_synth"/>
    <property type="match status" value="1"/>
</dbReference>
<dbReference type="InterPro" id="IPR015803">
    <property type="entry name" value="Cys-tRNA-ligase"/>
</dbReference>
<dbReference type="InterPro" id="IPR024909">
    <property type="entry name" value="Cys-tRNA/MSH_ligase"/>
</dbReference>
<dbReference type="InterPro" id="IPR056411">
    <property type="entry name" value="CysS_C"/>
</dbReference>
<dbReference type="InterPro" id="IPR014729">
    <property type="entry name" value="Rossmann-like_a/b/a_fold"/>
</dbReference>
<dbReference type="InterPro" id="IPR032678">
    <property type="entry name" value="tRNA-synt_1_cat_dom"/>
</dbReference>
<dbReference type="InterPro" id="IPR009080">
    <property type="entry name" value="tRNAsynth_Ia_anticodon-bd"/>
</dbReference>
<dbReference type="NCBIfam" id="TIGR00435">
    <property type="entry name" value="cysS"/>
    <property type="match status" value="1"/>
</dbReference>
<dbReference type="PANTHER" id="PTHR10890:SF3">
    <property type="entry name" value="CYSTEINE--TRNA LIGASE, CYTOPLASMIC"/>
    <property type="match status" value="1"/>
</dbReference>
<dbReference type="PANTHER" id="PTHR10890">
    <property type="entry name" value="CYSTEINYL-TRNA SYNTHETASE"/>
    <property type="match status" value="1"/>
</dbReference>
<dbReference type="Pfam" id="PF23493">
    <property type="entry name" value="CysS_C"/>
    <property type="match status" value="1"/>
</dbReference>
<dbReference type="Pfam" id="PF01406">
    <property type="entry name" value="tRNA-synt_1e"/>
    <property type="match status" value="1"/>
</dbReference>
<dbReference type="PRINTS" id="PR00983">
    <property type="entry name" value="TRNASYNTHCYS"/>
</dbReference>
<dbReference type="SUPFAM" id="SSF47323">
    <property type="entry name" value="Anticodon-binding domain of a subclass of class I aminoacyl-tRNA synthetases"/>
    <property type="match status" value="1"/>
</dbReference>
<dbReference type="SUPFAM" id="SSF52374">
    <property type="entry name" value="Nucleotidylyl transferase"/>
    <property type="match status" value="1"/>
</dbReference>
<reference key="1">
    <citation type="journal article" date="2006" name="Appl. Environ. Microbiol.">
        <title>Genome sequence of the chemolithoautotrophic nitrite-oxidizing bacterium Nitrobacter winogradskyi Nb-255.</title>
        <authorList>
            <person name="Starkenburg S.R."/>
            <person name="Chain P.S.G."/>
            <person name="Sayavedra-Soto L.A."/>
            <person name="Hauser L."/>
            <person name="Land M.L."/>
            <person name="Larimer F.W."/>
            <person name="Malfatti S.A."/>
            <person name="Klotz M.G."/>
            <person name="Bottomley P.J."/>
            <person name="Arp D.J."/>
            <person name="Hickey W.J."/>
        </authorList>
    </citation>
    <scope>NUCLEOTIDE SEQUENCE [LARGE SCALE GENOMIC DNA]</scope>
    <source>
        <strain>ATCC 25391 / DSM 10237 / CIP 104748 / NCIMB 11846 / Nb-255</strain>
    </source>
</reference>
<name>SYC_NITWN</name>
<sequence length="477" mass="54151">MDLRLYDTLTRRKRAFTPIDPSNVRMYVCGPTVYDFAHIGNARPVIVFDVLFRLLRHLYGDDHVTYARNITDVDDKINDRAARDFPDLPLNEAIRKVTEKTAAQFQADVAALGCLPPTHQPRATEFVLPRTDGKTDMVTFIKQLIARGHAYEAGGEVLFDVRSMPDYGALSGRRLDEQKAGARVAVDAHKRNPADFVLWKLSSENEPGWDSPWGRGRPGWHIECSAMSTAYLGDVFDIHGGGLDLIFPHHENEIAQSRCAHGTHAMANYWMHNGFLQVEGEKMSKSLGNFVTINELLTTEKFGGRKWPGEVLRLNMLRTHYRQPIDWTIKALEESETILRRVCGRIKQFEYARRGMPTKERSVQLNLPPEILEALVDDLNTPLMLSRIGELSYDDAFDHALLSIGIDVLSYARWLRSQEQYASSNVDELVVARLEARMRKDFKESDRIRDELAAMGVVLKDGKDADGKPVTTWEIAR</sequence>
<evidence type="ECO:0000255" key="1">
    <source>
        <dbReference type="HAMAP-Rule" id="MF_00041"/>
    </source>
</evidence>
<proteinExistence type="inferred from homology"/>
<organism>
    <name type="scientific">Nitrobacter winogradskyi (strain ATCC 25391 / DSM 10237 / CIP 104748 / NCIMB 11846 / Nb-255)</name>
    <dbReference type="NCBI Taxonomy" id="323098"/>
    <lineage>
        <taxon>Bacteria</taxon>
        <taxon>Pseudomonadati</taxon>
        <taxon>Pseudomonadota</taxon>
        <taxon>Alphaproteobacteria</taxon>
        <taxon>Hyphomicrobiales</taxon>
        <taxon>Nitrobacteraceae</taxon>
        <taxon>Nitrobacter</taxon>
    </lineage>
</organism>
<keyword id="KW-0030">Aminoacyl-tRNA synthetase</keyword>
<keyword id="KW-0067">ATP-binding</keyword>
<keyword id="KW-0963">Cytoplasm</keyword>
<keyword id="KW-0436">Ligase</keyword>
<keyword id="KW-0479">Metal-binding</keyword>
<keyword id="KW-0547">Nucleotide-binding</keyword>
<keyword id="KW-0648">Protein biosynthesis</keyword>
<keyword id="KW-1185">Reference proteome</keyword>
<keyword id="KW-0862">Zinc</keyword>
<accession>Q3STA1</accession>
<protein>
    <recommendedName>
        <fullName evidence="1">Cysteine--tRNA ligase</fullName>
        <ecNumber evidence="1">6.1.1.16</ecNumber>
    </recommendedName>
    <alternativeName>
        <fullName evidence="1">Cysteinyl-tRNA synthetase</fullName>
        <shortName evidence="1">CysRS</shortName>
    </alternativeName>
</protein>
<feature type="chain" id="PRO_0000240926" description="Cysteine--tRNA ligase">
    <location>
        <begin position="1"/>
        <end position="477"/>
    </location>
</feature>
<feature type="short sequence motif" description="'HIGH' region">
    <location>
        <begin position="31"/>
        <end position="41"/>
    </location>
</feature>
<feature type="short sequence motif" description="'KMSKS' region">
    <location>
        <begin position="282"/>
        <end position="286"/>
    </location>
</feature>
<feature type="binding site" evidence="1">
    <location>
        <position position="29"/>
    </location>
    <ligand>
        <name>Zn(2+)</name>
        <dbReference type="ChEBI" id="CHEBI:29105"/>
    </ligand>
</feature>
<feature type="binding site" evidence="1">
    <location>
        <position position="224"/>
    </location>
    <ligand>
        <name>Zn(2+)</name>
        <dbReference type="ChEBI" id="CHEBI:29105"/>
    </ligand>
</feature>
<feature type="binding site" evidence="1">
    <location>
        <position position="249"/>
    </location>
    <ligand>
        <name>Zn(2+)</name>
        <dbReference type="ChEBI" id="CHEBI:29105"/>
    </ligand>
</feature>
<feature type="binding site" evidence="1">
    <location>
        <position position="253"/>
    </location>
    <ligand>
        <name>Zn(2+)</name>
        <dbReference type="ChEBI" id="CHEBI:29105"/>
    </ligand>
</feature>
<feature type="binding site" evidence="1">
    <location>
        <position position="285"/>
    </location>
    <ligand>
        <name>ATP</name>
        <dbReference type="ChEBI" id="CHEBI:30616"/>
    </ligand>
</feature>
<gene>
    <name evidence="1" type="primary">cysS</name>
    <name type="ordered locus">Nwi_1228</name>
</gene>
<comment type="catalytic activity">
    <reaction evidence="1">
        <text>tRNA(Cys) + L-cysteine + ATP = L-cysteinyl-tRNA(Cys) + AMP + diphosphate</text>
        <dbReference type="Rhea" id="RHEA:17773"/>
        <dbReference type="Rhea" id="RHEA-COMP:9661"/>
        <dbReference type="Rhea" id="RHEA-COMP:9679"/>
        <dbReference type="ChEBI" id="CHEBI:30616"/>
        <dbReference type="ChEBI" id="CHEBI:33019"/>
        <dbReference type="ChEBI" id="CHEBI:35235"/>
        <dbReference type="ChEBI" id="CHEBI:78442"/>
        <dbReference type="ChEBI" id="CHEBI:78517"/>
        <dbReference type="ChEBI" id="CHEBI:456215"/>
        <dbReference type="EC" id="6.1.1.16"/>
    </reaction>
</comment>
<comment type="cofactor">
    <cofactor evidence="1">
        <name>Zn(2+)</name>
        <dbReference type="ChEBI" id="CHEBI:29105"/>
    </cofactor>
    <text evidence="1">Binds 1 zinc ion per subunit.</text>
</comment>
<comment type="subunit">
    <text evidence="1">Monomer.</text>
</comment>
<comment type="subcellular location">
    <subcellularLocation>
        <location evidence="1">Cytoplasm</location>
    </subcellularLocation>
</comment>
<comment type="similarity">
    <text evidence="1">Belongs to the class-I aminoacyl-tRNA synthetase family.</text>
</comment>